<protein>
    <recommendedName>
        <fullName evidence="1">Cysteine desulfurase IscS</fullName>
        <ecNumber evidence="1">2.8.1.7</ecNumber>
    </recommendedName>
</protein>
<sequence>MKLPIYLDYSATTPVDPRVAEKMMQFLTLDGTFGNPASRSHRFGWQAEEAVDIARNQIAELVGADPREIVFTSGATESDNLAIKGAANFYQKKGKHIITSKTEHKAVLDTCRQLEREGFEVTYLAPQRNGIIDLNELEAAMRDDTILVSIMHVNNEIGVVQDIATIGEMCRARGIIYHVDATQSVGKLPIDLSQLKVDLMSFSGHKIYGPKGIGALYVRRKPRIRIEAQMHGGGHERGMRSGTLPVHQIVGMGEAYRIAKEEMETEMARLRGLRNRLWNGIKDIEEVYLNGDLEQGAPNILNVSFNYVEGESLIMALKDLAVSSGSACTSASLEPSYVLRALGMNDELAHSSIRFSLGRFTTEEEIDYAIDLVRKSIGRLRDLSPLWEMYKQGVDLNSIEWAHH</sequence>
<reference key="1">
    <citation type="journal article" date="2011" name="J. Bacteriol.">
        <title>Comparative genomics of 28 Salmonella enterica isolates: evidence for CRISPR-mediated adaptive sublineage evolution.</title>
        <authorList>
            <person name="Fricke W.F."/>
            <person name="Mammel M.K."/>
            <person name="McDermott P.F."/>
            <person name="Tartera C."/>
            <person name="White D.G."/>
            <person name="Leclerc J.E."/>
            <person name="Ravel J."/>
            <person name="Cebula T.A."/>
        </authorList>
    </citation>
    <scope>NUCLEOTIDE SEQUENCE [LARGE SCALE GENOMIC DNA]</scope>
    <source>
        <strain>CVM19633</strain>
    </source>
</reference>
<accession>B4TRX5</accession>
<proteinExistence type="inferred from homology"/>
<feature type="chain" id="PRO_1000119647" description="Cysteine desulfurase IscS">
    <location>
        <begin position="1"/>
        <end position="404"/>
    </location>
</feature>
<feature type="active site" description="Cysteine persulfide intermediate" evidence="1">
    <location>
        <position position="328"/>
    </location>
</feature>
<feature type="binding site" evidence="1">
    <location>
        <begin position="75"/>
        <end position="76"/>
    </location>
    <ligand>
        <name>pyridoxal 5'-phosphate</name>
        <dbReference type="ChEBI" id="CHEBI:597326"/>
    </ligand>
</feature>
<feature type="binding site" evidence="1">
    <location>
        <position position="155"/>
    </location>
    <ligand>
        <name>pyridoxal 5'-phosphate</name>
        <dbReference type="ChEBI" id="CHEBI:597326"/>
    </ligand>
</feature>
<feature type="binding site" evidence="1">
    <location>
        <position position="183"/>
    </location>
    <ligand>
        <name>pyridoxal 5'-phosphate</name>
        <dbReference type="ChEBI" id="CHEBI:597326"/>
    </ligand>
</feature>
<feature type="binding site" evidence="1">
    <location>
        <begin position="203"/>
        <end position="205"/>
    </location>
    <ligand>
        <name>pyridoxal 5'-phosphate</name>
        <dbReference type="ChEBI" id="CHEBI:597326"/>
    </ligand>
</feature>
<feature type="binding site" evidence="1">
    <location>
        <position position="243"/>
    </location>
    <ligand>
        <name>pyridoxal 5'-phosphate</name>
        <dbReference type="ChEBI" id="CHEBI:597326"/>
    </ligand>
</feature>
<feature type="binding site" description="via persulfide group" evidence="1">
    <location>
        <position position="328"/>
    </location>
    <ligand>
        <name>[2Fe-2S] cluster</name>
        <dbReference type="ChEBI" id="CHEBI:190135"/>
        <note>ligand shared with IscU</note>
    </ligand>
</feature>
<feature type="modified residue" description="N6-(pyridoxal phosphate)lysine" evidence="1">
    <location>
        <position position="206"/>
    </location>
</feature>
<name>ISCS_SALSV</name>
<evidence type="ECO:0000255" key="1">
    <source>
        <dbReference type="HAMAP-Rule" id="MF_00331"/>
    </source>
</evidence>
<gene>
    <name evidence="1" type="primary">iscS</name>
    <name type="ordered locus">SeSA_A2783</name>
</gene>
<comment type="function">
    <text evidence="1">Master enzyme that delivers sulfur to a number of partners involved in Fe-S cluster assembly, tRNA modification or cofactor biosynthesis. Catalyzes the removal of elemental sulfur and selenium atoms from cysteine and selenocysteine to produce alanine. Functions as a sulfur delivery protein for Fe-S cluster synthesis onto IscU, an Fe-S scaffold assembly protein, as well as other S acceptor proteins. Also functions as a selenium delivery protein in the pathway for the biosynthesis of selenophosphate.</text>
</comment>
<comment type="catalytic activity">
    <reaction evidence="1">
        <text>(sulfur carrier)-H + L-cysteine = (sulfur carrier)-SH + L-alanine</text>
        <dbReference type="Rhea" id="RHEA:43892"/>
        <dbReference type="Rhea" id="RHEA-COMP:14737"/>
        <dbReference type="Rhea" id="RHEA-COMP:14739"/>
        <dbReference type="ChEBI" id="CHEBI:29917"/>
        <dbReference type="ChEBI" id="CHEBI:35235"/>
        <dbReference type="ChEBI" id="CHEBI:57972"/>
        <dbReference type="ChEBI" id="CHEBI:64428"/>
        <dbReference type="EC" id="2.8.1.7"/>
    </reaction>
</comment>
<comment type="cofactor">
    <cofactor evidence="1">
        <name>pyridoxal 5'-phosphate</name>
        <dbReference type="ChEBI" id="CHEBI:597326"/>
    </cofactor>
</comment>
<comment type="pathway">
    <text evidence="1">Cofactor biosynthesis; iron-sulfur cluster biosynthesis.</text>
</comment>
<comment type="subunit">
    <text evidence="1">Homodimer. Forms a heterotetramer with IscU, interacts with other sulfur acceptors.</text>
</comment>
<comment type="subcellular location">
    <subcellularLocation>
        <location evidence="1">Cytoplasm</location>
    </subcellularLocation>
</comment>
<comment type="similarity">
    <text evidence="1">Belongs to the class-V pyridoxal-phosphate-dependent aminotransferase family. NifS/IscS subfamily.</text>
</comment>
<keyword id="KW-0001">2Fe-2S</keyword>
<keyword id="KW-0963">Cytoplasm</keyword>
<keyword id="KW-0408">Iron</keyword>
<keyword id="KW-0411">Iron-sulfur</keyword>
<keyword id="KW-0479">Metal-binding</keyword>
<keyword id="KW-0663">Pyridoxal phosphate</keyword>
<keyword id="KW-0808">Transferase</keyword>
<dbReference type="EC" id="2.8.1.7" evidence="1"/>
<dbReference type="EMBL" id="CP001127">
    <property type="protein sequence ID" value="ACF92861.1"/>
    <property type="molecule type" value="Genomic_DNA"/>
</dbReference>
<dbReference type="RefSeq" id="WP_000775262.1">
    <property type="nucleotide sequence ID" value="NC_011094.1"/>
</dbReference>
<dbReference type="SMR" id="B4TRX5"/>
<dbReference type="KEGG" id="sew:SeSA_A2783"/>
<dbReference type="HOGENOM" id="CLU_003433_0_2_6"/>
<dbReference type="UniPathway" id="UPA00266"/>
<dbReference type="Proteomes" id="UP000001865">
    <property type="component" value="Chromosome"/>
</dbReference>
<dbReference type="GO" id="GO:1990221">
    <property type="term" value="C:L-cysteine desulfurase complex"/>
    <property type="evidence" value="ECO:0007669"/>
    <property type="project" value="UniProtKB-ARBA"/>
</dbReference>
<dbReference type="GO" id="GO:0051537">
    <property type="term" value="F:2 iron, 2 sulfur cluster binding"/>
    <property type="evidence" value="ECO:0007669"/>
    <property type="project" value="UniProtKB-UniRule"/>
</dbReference>
<dbReference type="GO" id="GO:0031071">
    <property type="term" value="F:cysteine desulfurase activity"/>
    <property type="evidence" value="ECO:0007669"/>
    <property type="project" value="UniProtKB-UniRule"/>
</dbReference>
<dbReference type="GO" id="GO:0046872">
    <property type="term" value="F:metal ion binding"/>
    <property type="evidence" value="ECO:0007669"/>
    <property type="project" value="UniProtKB-KW"/>
</dbReference>
<dbReference type="GO" id="GO:0030170">
    <property type="term" value="F:pyridoxal phosphate binding"/>
    <property type="evidence" value="ECO:0007669"/>
    <property type="project" value="UniProtKB-UniRule"/>
</dbReference>
<dbReference type="GO" id="GO:0044571">
    <property type="term" value="P:[2Fe-2S] cluster assembly"/>
    <property type="evidence" value="ECO:0007669"/>
    <property type="project" value="UniProtKB-UniRule"/>
</dbReference>
<dbReference type="FunFam" id="3.40.640.10:FF:000003">
    <property type="entry name" value="Cysteine desulfurase IscS"/>
    <property type="match status" value="1"/>
</dbReference>
<dbReference type="FunFam" id="3.90.1150.10:FF:000002">
    <property type="entry name" value="Cysteine desulfurase IscS"/>
    <property type="match status" value="1"/>
</dbReference>
<dbReference type="Gene3D" id="3.90.1150.10">
    <property type="entry name" value="Aspartate Aminotransferase, domain 1"/>
    <property type="match status" value="1"/>
</dbReference>
<dbReference type="Gene3D" id="3.40.640.10">
    <property type="entry name" value="Type I PLP-dependent aspartate aminotransferase-like (Major domain)"/>
    <property type="match status" value="1"/>
</dbReference>
<dbReference type="HAMAP" id="MF_00331">
    <property type="entry name" value="Cys_desulf_IscS"/>
    <property type="match status" value="1"/>
</dbReference>
<dbReference type="InterPro" id="IPR000192">
    <property type="entry name" value="Aminotrans_V_dom"/>
</dbReference>
<dbReference type="InterPro" id="IPR020578">
    <property type="entry name" value="Aminotrans_V_PyrdxlP_BS"/>
</dbReference>
<dbReference type="InterPro" id="IPR010240">
    <property type="entry name" value="Cys_deSase_IscS"/>
</dbReference>
<dbReference type="InterPro" id="IPR016454">
    <property type="entry name" value="Cysteine_dSase"/>
</dbReference>
<dbReference type="InterPro" id="IPR015424">
    <property type="entry name" value="PyrdxlP-dep_Trfase"/>
</dbReference>
<dbReference type="InterPro" id="IPR015421">
    <property type="entry name" value="PyrdxlP-dep_Trfase_major"/>
</dbReference>
<dbReference type="InterPro" id="IPR015422">
    <property type="entry name" value="PyrdxlP-dep_Trfase_small"/>
</dbReference>
<dbReference type="NCBIfam" id="TIGR02006">
    <property type="entry name" value="IscS"/>
    <property type="match status" value="1"/>
</dbReference>
<dbReference type="NCBIfam" id="NF002806">
    <property type="entry name" value="PRK02948.1"/>
    <property type="match status" value="1"/>
</dbReference>
<dbReference type="NCBIfam" id="NF010611">
    <property type="entry name" value="PRK14012.1"/>
    <property type="match status" value="1"/>
</dbReference>
<dbReference type="PANTHER" id="PTHR11601:SF34">
    <property type="entry name" value="CYSTEINE DESULFURASE"/>
    <property type="match status" value="1"/>
</dbReference>
<dbReference type="PANTHER" id="PTHR11601">
    <property type="entry name" value="CYSTEINE DESULFURYLASE FAMILY MEMBER"/>
    <property type="match status" value="1"/>
</dbReference>
<dbReference type="Pfam" id="PF00266">
    <property type="entry name" value="Aminotran_5"/>
    <property type="match status" value="1"/>
</dbReference>
<dbReference type="PIRSF" id="PIRSF005572">
    <property type="entry name" value="NifS"/>
    <property type="match status" value="1"/>
</dbReference>
<dbReference type="SUPFAM" id="SSF53383">
    <property type="entry name" value="PLP-dependent transferases"/>
    <property type="match status" value="1"/>
</dbReference>
<dbReference type="PROSITE" id="PS00595">
    <property type="entry name" value="AA_TRANSFER_CLASS_5"/>
    <property type="match status" value="1"/>
</dbReference>
<organism>
    <name type="scientific">Salmonella schwarzengrund (strain CVM19633)</name>
    <dbReference type="NCBI Taxonomy" id="439843"/>
    <lineage>
        <taxon>Bacteria</taxon>
        <taxon>Pseudomonadati</taxon>
        <taxon>Pseudomonadota</taxon>
        <taxon>Gammaproteobacteria</taxon>
        <taxon>Enterobacterales</taxon>
        <taxon>Enterobacteriaceae</taxon>
        <taxon>Salmonella</taxon>
    </lineage>
</organism>